<dbReference type="EC" id="4.1.1.98" evidence="1"/>
<dbReference type="EMBL" id="AE002098">
    <property type="protein sequence ID" value="AAF42042.1"/>
    <property type="status" value="ALT_INIT"/>
    <property type="molecule type" value="Genomic_DNA"/>
</dbReference>
<dbReference type="PIR" id="H81051">
    <property type="entry name" value="H81051"/>
</dbReference>
<dbReference type="RefSeq" id="NP_274698.1">
    <property type="nucleotide sequence ID" value="NC_003112.2"/>
</dbReference>
<dbReference type="RefSeq" id="WP_002222122.1">
    <property type="nucleotide sequence ID" value="NC_003112.2"/>
</dbReference>
<dbReference type="SMR" id="Q9JY86"/>
<dbReference type="FunCoup" id="Q9JY86">
    <property type="interactions" value="332"/>
</dbReference>
<dbReference type="STRING" id="122586.NMB1694"/>
<dbReference type="PaxDb" id="122586-NMB1694"/>
<dbReference type="KEGG" id="nme:NMB1694"/>
<dbReference type="PATRIC" id="fig|122586.8.peg.2177"/>
<dbReference type="HOGENOM" id="CLU_023348_4_1_4"/>
<dbReference type="InParanoid" id="Q9JY86"/>
<dbReference type="OrthoDB" id="9809841at2"/>
<dbReference type="UniPathway" id="UPA00232"/>
<dbReference type="Proteomes" id="UP000000425">
    <property type="component" value="Chromosome"/>
</dbReference>
<dbReference type="GO" id="GO:0005737">
    <property type="term" value="C:cytoplasm"/>
    <property type="evidence" value="ECO:0000318"/>
    <property type="project" value="GO_Central"/>
</dbReference>
<dbReference type="GO" id="GO:0005829">
    <property type="term" value="C:cytosol"/>
    <property type="evidence" value="ECO:0000318"/>
    <property type="project" value="GO_Central"/>
</dbReference>
<dbReference type="GO" id="GO:0005886">
    <property type="term" value="C:plasma membrane"/>
    <property type="evidence" value="ECO:0007669"/>
    <property type="project" value="UniProtKB-SubCell"/>
</dbReference>
<dbReference type="GO" id="GO:0008694">
    <property type="term" value="F:3-octaprenyl-4-hydroxybenzoate carboxy-lyase activity"/>
    <property type="evidence" value="ECO:0000318"/>
    <property type="project" value="GO_Central"/>
</dbReference>
<dbReference type="GO" id="GO:0046872">
    <property type="term" value="F:metal ion binding"/>
    <property type="evidence" value="ECO:0007669"/>
    <property type="project" value="UniProtKB-KW"/>
</dbReference>
<dbReference type="GO" id="GO:0006744">
    <property type="term" value="P:ubiquinone biosynthetic process"/>
    <property type="evidence" value="ECO:0000318"/>
    <property type="project" value="GO_Central"/>
</dbReference>
<dbReference type="FunFam" id="1.20.5.570:FF:000001">
    <property type="entry name" value="3-octaprenyl-4-hydroxybenzoate carboxy-lyase"/>
    <property type="match status" value="1"/>
</dbReference>
<dbReference type="FunFam" id="3.40.1670.10:FF:000001">
    <property type="entry name" value="3-octaprenyl-4-hydroxybenzoate carboxy-lyase"/>
    <property type="match status" value="1"/>
</dbReference>
<dbReference type="Gene3D" id="1.20.5.570">
    <property type="entry name" value="Single helix bin"/>
    <property type="match status" value="1"/>
</dbReference>
<dbReference type="Gene3D" id="3.40.1670.10">
    <property type="entry name" value="UbiD C-terminal domain-like"/>
    <property type="match status" value="1"/>
</dbReference>
<dbReference type="HAMAP" id="MF_01636">
    <property type="entry name" value="UbiD"/>
    <property type="match status" value="1"/>
</dbReference>
<dbReference type="InterPro" id="IPR002830">
    <property type="entry name" value="UbiD"/>
</dbReference>
<dbReference type="InterPro" id="IPR049381">
    <property type="entry name" value="UbiD-like_C"/>
</dbReference>
<dbReference type="InterPro" id="IPR049383">
    <property type="entry name" value="UbiD-like_N"/>
</dbReference>
<dbReference type="InterPro" id="IPR023677">
    <property type="entry name" value="UbiD_bacteria"/>
</dbReference>
<dbReference type="InterPro" id="IPR048304">
    <property type="entry name" value="UbiD_Rift_dom"/>
</dbReference>
<dbReference type="NCBIfam" id="NF008175">
    <property type="entry name" value="PRK10922.1"/>
    <property type="match status" value="1"/>
</dbReference>
<dbReference type="NCBIfam" id="TIGR00148">
    <property type="entry name" value="UbiD family decarboxylase"/>
    <property type="match status" value="1"/>
</dbReference>
<dbReference type="PANTHER" id="PTHR30108">
    <property type="entry name" value="3-OCTAPRENYL-4-HYDROXYBENZOATE CARBOXY-LYASE-RELATED"/>
    <property type="match status" value="1"/>
</dbReference>
<dbReference type="PANTHER" id="PTHR30108:SF17">
    <property type="entry name" value="FERULIC ACID DECARBOXYLASE 1"/>
    <property type="match status" value="1"/>
</dbReference>
<dbReference type="Pfam" id="PF01977">
    <property type="entry name" value="UbiD"/>
    <property type="match status" value="1"/>
</dbReference>
<dbReference type="Pfam" id="PF20696">
    <property type="entry name" value="UbiD_C"/>
    <property type="match status" value="1"/>
</dbReference>
<dbReference type="Pfam" id="PF20695">
    <property type="entry name" value="UbiD_N"/>
    <property type="match status" value="1"/>
</dbReference>
<dbReference type="SUPFAM" id="SSF50475">
    <property type="entry name" value="FMN-binding split barrel"/>
    <property type="match status" value="1"/>
</dbReference>
<dbReference type="SUPFAM" id="SSF143968">
    <property type="entry name" value="UbiD C-terminal domain-like"/>
    <property type="match status" value="1"/>
</dbReference>
<organism>
    <name type="scientific">Neisseria meningitidis serogroup B (strain ATCC BAA-335 / MC58)</name>
    <dbReference type="NCBI Taxonomy" id="122586"/>
    <lineage>
        <taxon>Bacteria</taxon>
        <taxon>Pseudomonadati</taxon>
        <taxon>Pseudomonadota</taxon>
        <taxon>Betaproteobacteria</taxon>
        <taxon>Neisseriales</taxon>
        <taxon>Neisseriaceae</taxon>
        <taxon>Neisseria</taxon>
    </lineage>
</organism>
<reference key="1">
    <citation type="journal article" date="2000" name="Science">
        <title>Complete genome sequence of Neisseria meningitidis serogroup B strain MC58.</title>
        <authorList>
            <person name="Tettelin H."/>
            <person name="Saunders N.J."/>
            <person name="Heidelberg J.F."/>
            <person name="Jeffries A.C."/>
            <person name="Nelson K.E."/>
            <person name="Eisen J.A."/>
            <person name="Ketchum K.A."/>
            <person name="Hood D.W."/>
            <person name="Peden J.F."/>
            <person name="Dodson R.J."/>
            <person name="Nelson W.C."/>
            <person name="Gwinn M.L."/>
            <person name="DeBoy R.T."/>
            <person name="Peterson J.D."/>
            <person name="Hickey E.K."/>
            <person name="Haft D.H."/>
            <person name="Salzberg S.L."/>
            <person name="White O."/>
            <person name="Fleischmann R.D."/>
            <person name="Dougherty B.A."/>
            <person name="Mason T.M."/>
            <person name="Ciecko A."/>
            <person name="Parksey D.S."/>
            <person name="Blair E."/>
            <person name="Cittone H."/>
            <person name="Clark E.B."/>
            <person name="Cotton M.D."/>
            <person name="Utterback T.R."/>
            <person name="Khouri H.M."/>
            <person name="Qin H."/>
            <person name="Vamathevan J.J."/>
            <person name="Gill J."/>
            <person name="Scarlato V."/>
            <person name="Masignani V."/>
            <person name="Pizza M."/>
            <person name="Grandi G."/>
            <person name="Sun L."/>
            <person name="Smith H.O."/>
            <person name="Fraser C.M."/>
            <person name="Moxon E.R."/>
            <person name="Rappuoli R."/>
            <person name="Venter J.C."/>
        </authorList>
    </citation>
    <scope>NUCLEOTIDE SEQUENCE [LARGE SCALE GENOMIC DNA]</scope>
    <source>
        <strain>ATCC BAA-335 / MC58</strain>
    </source>
</reference>
<proteinExistence type="inferred from homology"/>
<comment type="function">
    <text evidence="1">Catalyzes the decarboxylation of 3-octaprenyl-4-hydroxy benzoate to 2-octaprenylphenol, an intermediate step in ubiquinone biosynthesis.</text>
</comment>
<comment type="catalytic activity">
    <reaction evidence="1">
        <text>a 4-hydroxy-3-(all-trans-polyprenyl)benzoate + H(+) = a 2-(all-trans-polyprenyl)phenol + CO2</text>
        <dbReference type="Rhea" id="RHEA:41680"/>
        <dbReference type="Rhea" id="RHEA-COMP:9514"/>
        <dbReference type="Rhea" id="RHEA-COMP:9516"/>
        <dbReference type="ChEBI" id="CHEBI:1269"/>
        <dbReference type="ChEBI" id="CHEBI:15378"/>
        <dbReference type="ChEBI" id="CHEBI:16526"/>
        <dbReference type="ChEBI" id="CHEBI:78396"/>
        <dbReference type="EC" id="4.1.1.98"/>
    </reaction>
</comment>
<comment type="cofactor">
    <cofactor evidence="1">
        <name>prenylated FMN</name>
        <dbReference type="ChEBI" id="CHEBI:87746"/>
    </cofactor>
    <text evidence="1">Binds 1 prenylated FMN per subunit.</text>
</comment>
<comment type="cofactor">
    <cofactor evidence="1">
        <name>Mn(2+)</name>
        <dbReference type="ChEBI" id="CHEBI:29035"/>
    </cofactor>
</comment>
<comment type="pathway">
    <text evidence="1">Cofactor biosynthesis; ubiquinone biosynthesis.</text>
</comment>
<comment type="subunit">
    <text evidence="1">Homohexamer.</text>
</comment>
<comment type="subcellular location">
    <subcellularLocation>
        <location evidence="1">Cell membrane</location>
        <topology evidence="1">Peripheral membrane protein</topology>
    </subcellularLocation>
</comment>
<comment type="similarity">
    <text evidence="1">Belongs to the UbiD family.</text>
</comment>
<comment type="sequence caution" evidence="2">
    <conflict type="erroneous initiation">
        <sequence resource="EMBL-CDS" id="AAF42042"/>
    </conflict>
</comment>
<name>UBID_NEIMB</name>
<accession>Q9JY86</accession>
<gene>
    <name evidence="1" type="primary">ubiD</name>
    <name type="ordered locus">NMB1694</name>
</gene>
<feature type="chain" id="PRO_0000157362" description="3-octaprenyl-4-hydroxybenzoate carboxy-lyase">
    <location>
        <begin position="1"/>
        <end position="492"/>
    </location>
</feature>
<feature type="active site" description="Proton donor" evidence="1">
    <location>
        <position position="292"/>
    </location>
</feature>
<feature type="binding site" evidence="1">
    <location>
        <position position="177"/>
    </location>
    <ligand>
        <name>Mn(2+)</name>
        <dbReference type="ChEBI" id="CHEBI:29035"/>
    </ligand>
</feature>
<feature type="binding site" evidence="1">
    <location>
        <begin position="180"/>
        <end position="182"/>
    </location>
    <ligand>
        <name>prenylated FMN</name>
        <dbReference type="ChEBI" id="CHEBI:87746"/>
    </ligand>
</feature>
<feature type="binding site" evidence="1">
    <location>
        <begin position="194"/>
        <end position="196"/>
    </location>
    <ligand>
        <name>prenylated FMN</name>
        <dbReference type="ChEBI" id="CHEBI:87746"/>
    </ligand>
</feature>
<feature type="binding site" evidence="1">
    <location>
        <begin position="199"/>
        <end position="200"/>
    </location>
    <ligand>
        <name>prenylated FMN</name>
        <dbReference type="ChEBI" id="CHEBI:87746"/>
    </ligand>
</feature>
<feature type="binding site" evidence="1">
    <location>
        <position position="243"/>
    </location>
    <ligand>
        <name>Mn(2+)</name>
        <dbReference type="ChEBI" id="CHEBI:29035"/>
    </ligand>
</feature>
<evidence type="ECO:0000255" key="1">
    <source>
        <dbReference type="HAMAP-Rule" id="MF_01636"/>
    </source>
</evidence>
<evidence type="ECO:0000305" key="2"/>
<keyword id="KW-1003">Cell membrane</keyword>
<keyword id="KW-0210">Decarboxylase</keyword>
<keyword id="KW-0285">Flavoprotein</keyword>
<keyword id="KW-0288">FMN</keyword>
<keyword id="KW-0456">Lyase</keyword>
<keyword id="KW-0464">Manganese</keyword>
<keyword id="KW-0472">Membrane</keyword>
<keyword id="KW-0479">Metal-binding</keyword>
<keyword id="KW-1185">Reference proteome</keyword>
<keyword id="KW-0831">Ubiquinone biosynthesis</keyword>
<sequence length="492" mass="55525">MKYKDLRDFIAMLEQQGKLKRVAHPISPYLEMTEIADRVLRAEGPALLFENPIKPDGTRYGYPVLANLFGTPERVAMGMGADSVSKLREIGQTLAYLKEPEPPKGIKDAFSKLPLLKDIWSMAPNVVKNAPCQEIVWEGEDVDLYQLPIQHCWPEDVAPLVTWGLTVTRGPHKKRQNLGIYRQQLIGKNKLIMRWLSHRGGALDYQEFRKLNPDTPYPVAVVLGCDPATILGAVTPVPDTLSEYQFAGLLRGSRTELVKCIGNDLQVPARAEIVLEGVIHPNETALEGPYGDHTGYYNEQDYFPVFTVERITMRENPIYHSTYTGKPPDEPAVLGVALNEVFVPLLQKQFPEITDFYLPPEGCSYRMAVVSMKKQYAGHAKRVMMGCWSFLRQFMYTKFIIVVDDDVNVRDWKEVIWAVTTRMDPVRDTVLVENTPIDYLDFASPVSGLGGKMGLDATNKWPGETDREWGRVIKKDPAVTAKIDGIWEELGL</sequence>
<protein>
    <recommendedName>
        <fullName evidence="1">3-octaprenyl-4-hydroxybenzoate carboxy-lyase</fullName>
        <ecNumber evidence="1">4.1.1.98</ecNumber>
    </recommendedName>
    <alternativeName>
        <fullName evidence="1">Polyprenyl p-hydroxybenzoate decarboxylase</fullName>
    </alternativeName>
</protein>